<sequence>MDIVSLAWAALMVVFTFSLSLVVWGRSGL</sequence>
<keyword id="KW-0150">Chloroplast</keyword>
<keyword id="KW-0249">Electron transport</keyword>
<keyword id="KW-0472">Membrane</keyword>
<keyword id="KW-0602">Photosynthesis</keyword>
<keyword id="KW-0934">Plastid</keyword>
<keyword id="KW-0793">Thylakoid</keyword>
<keyword id="KW-0812">Transmembrane</keyword>
<keyword id="KW-1133">Transmembrane helix</keyword>
<keyword id="KW-0813">Transport</keyword>
<protein>
    <recommendedName>
        <fullName evidence="1">Cytochrome b6-f complex subunit 8</fullName>
    </recommendedName>
    <alternativeName>
        <fullName evidence="1">Cytochrome b6-f complex subunit PetN</fullName>
    </alternativeName>
    <alternativeName>
        <fullName evidence="1">Cytochrome b6-f complex subunit VIII</fullName>
    </alternativeName>
</protein>
<comment type="function">
    <text evidence="1">Component of the cytochrome b6-f complex, which mediates electron transfer between photosystem II (PSII) and photosystem I (PSI), cyclic electron flow around PSI, and state transitions.</text>
</comment>
<comment type="subunit">
    <text evidence="1">The 4 large subunits of the cytochrome b6-f complex are cytochrome b6, subunit IV (17 kDa polypeptide, PetD), cytochrome f and the Rieske protein, while the 4 small subunits are PetG, PetL, PetM and PetN. The complex functions as a dimer.</text>
</comment>
<comment type="subcellular location">
    <subcellularLocation>
        <location>Plastid</location>
        <location>Chloroplast thylakoid membrane</location>
        <topology>Single-pass membrane protein</topology>
    </subcellularLocation>
</comment>
<comment type="similarity">
    <text evidence="1">Belongs to the PetN family.</text>
</comment>
<feature type="chain" id="PRO_0000275554" description="Cytochrome b6-f complex subunit 8">
    <location>
        <begin position="1"/>
        <end position="29"/>
    </location>
</feature>
<feature type="transmembrane region" description="Helical" evidence="1">
    <location>
        <begin position="3"/>
        <end position="23"/>
    </location>
</feature>
<geneLocation type="chloroplast"/>
<accession>Q1KXX4</accession>
<organism>
    <name type="scientific">Helianthus annuus</name>
    <name type="common">Common sunflower</name>
    <dbReference type="NCBI Taxonomy" id="4232"/>
    <lineage>
        <taxon>Eukaryota</taxon>
        <taxon>Viridiplantae</taxon>
        <taxon>Streptophyta</taxon>
        <taxon>Embryophyta</taxon>
        <taxon>Tracheophyta</taxon>
        <taxon>Spermatophyta</taxon>
        <taxon>Magnoliopsida</taxon>
        <taxon>eudicotyledons</taxon>
        <taxon>Gunneridae</taxon>
        <taxon>Pentapetalae</taxon>
        <taxon>asterids</taxon>
        <taxon>campanulids</taxon>
        <taxon>Asterales</taxon>
        <taxon>Asteraceae</taxon>
        <taxon>Asteroideae</taxon>
        <taxon>Heliantheae alliance</taxon>
        <taxon>Heliantheae</taxon>
        <taxon>Helianthus</taxon>
    </lineage>
</organism>
<evidence type="ECO:0000255" key="1">
    <source>
        <dbReference type="HAMAP-Rule" id="MF_00395"/>
    </source>
</evidence>
<reference key="1">
    <citation type="submission" date="2006-01" db="EMBL/GenBank/DDBJ databases">
        <title>A comparison of the first two published chloroplast genomes in Asteraceae: Lactuca and Helianthus.</title>
        <authorList>
            <person name="Timme R.E."/>
            <person name="Kuehl J.V."/>
            <person name="Boore J.L."/>
            <person name="Jansen R.K."/>
        </authorList>
    </citation>
    <scope>NUCLEOTIDE SEQUENCE [LARGE SCALE GENOMIC DNA]</scope>
    <source>
        <strain>cv. HA383</strain>
    </source>
</reference>
<gene>
    <name evidence="1" type="primary">petN</name>
</gene>
<name>PETN_HELAN</name>
<dbReference type="EMBL" id="DQ383815">
    <property type="protein sequence ID" value="ABD47131.1"/>
    <property type="molecule type" value="Genomic_DNA"/>
</dbReference>
<dbReference type="RefSeq" id="YP_588102.1">
    <property type="nucleotide sequence ID" value="NC_007977.1"/>
</dbReference>
<dbReference type="SMR" id="Q1KXX4"/>
<dbReference type="GeneID" id="4055646"/>
<dbReference type="KEGG" id="han:4055646"/>
<dbReference type="GO" id="GO:0009535">
    <property type="term" value="C:chloroplast thylakoid membrane"/>
    <property type="evidence" value="ECO:0007669"/>
    <property type="project" value="UniProtKB-SubCell"/>
</dbReference>
<dbReference type="GO" id="GO:0009512">
    <property type="term" value="C:cytochrome b6f complex"/>
    <property type="evidence" value="ECO:0007669"/>
    <property type="project" value="InterPro"/>
</dbReference>
<dbReference type="GO" id="GO:0045158">
    <property type="term" value="F:electron transporter, transferring electrons within cytochrome b6/f complex of photosystem II activity"/>
    <property type="evidence" value="ECO:0007669"/>
    <property type="project" value="InterPro"/>
</dbReference>
<dbReference type="GO" id="GO:0017004">
    <property type="term" value="P:cytochrome complex assembly"/>
    <property type="evidence" value="ECO:0007669"/>
    <property type="project" value="UniProtKB-UniRule"/>
</dbReference>
<dbReference type="GO" id="GO:0015979">
    <property type="term" value="P:photosynthesis"/>
    <property type="evidence" value="ECO:0007669"/>
    <property type="project" value="UniProtKB-KW"/>
</dbReference>
<dbReference type="HAMAP" id="MF_00395">
    <property type="entry name" value="Cytb6_f_PetN"/>
    <property type="match status" value="1"/>
</dbReference>
<dbReference type="InterPro" id="IPR036143">
    <property type="entry name" value="Cytochr_b6-f_cplx_su8_sf"/>
</dbReference>
<dbReference type="InterPro" id="IPR005497">
    <property type="entry name" value="Cytochrome_b6-f_cplx_su8"/>
</dbReference>
<dbReference type="Pfam" id="PF03742">
    <property type="entry name" value="PetN"/>
    <property type="match status" value="1"/>
</dbReference>
<dbReference type="SUPFAM" id="SSF103451">
    <property type="entry name" value="PetN subunit of the cytochrome b6f complex"/>
    <property type="match status" value="1"/>
</dbReference>
<proteinExistence type="inferred from homology"/>